<evidence type="ECO:0000255" key="1">
    <source>
        <dbReference type="HAMAP-Rule" id="MF_00061"/>
    </source>
</evidence>
<accession>Q8AA41</accession>
<gene>
    <name evidence="1" type="primary">ispE</name>
    <name type="ordered locus">BT_0624</name>
</gene>
<feature type="chain" id="PRO_0000189189" description="4-diphosphocytidyl-2-C-methyl-D-erythritol kinase">
    <location>
        <begin position="1"/>
        <end position="274"/>
    </location>
</feature>
<feature type="active site" evidence="1">
    <location>
        <position position="8"/>
    </location>
</feature>
<feature type="active site" evidence="1">
    <location>
        <position position="136"/>
    </location>
</feature>
<feature type="binding site" evidence="1">
    <location>
        <begin position="94"/>
        <end position="104"/>
    </location>
    <ligand>
        <name>ATP</name>
        <dbReference type="ChEBI" id="CHEBI:30616"/>
    </ligand>
</feature>
<dbReference type="EC" id="2.7.1.148" evidence="1"/>
<dbReference type="EMBL" id="AE015928">
    <property type="protein sequence ID" value="AAO75731.1"/>
    <property type="molecule type" value="Genomic_DNA"/>
</dbReference>
<dbReference type="RefSeq" id="NP_809537.1">
    <property type="nucleotide sequence ID" value="NC_004663.1"/>
</dbReference>
<dbReference type="RefSeq" id="WP_011107363.1">
    <property type="nucleotide sequence ID" value="NZ_UYXG01000002.1"/>
</dbReference>
<dbReference type="SMR" id="Q8AA41"/>
<dbReference type="FunCoup" id="Q8AA41">
    <property type="interactions" value="251"/>
</dbReference>
<dbReference type="STRING" id="226186.BT_0624"/>
<dbReference type="PaxDb" id="226186-BT_0624"/>
<dbReference type="EnsemblBacteria" id="AAO75731">
    <property type="protein sequence ID" value="AAO75731"/>
    <property type="gene ID" value="BT_0624"/>
</dbReference>
<dbReference type="GeneID" id="60926584"/>
<dbReference type="KEGG" id="bth:BT_0624"/>
<dbReference type="PATRIC" id="fig|226186.12.peg.632"/>
<dbReference type="eggNOG" id="COG1947">
    <property type="taxonomic scope" value="Bacteria"/>
</dbReference>
<dbReference type="HOGENOM" id="CLU_053057_1_1_10"/>
<dbReference type="InParanoid" id="Q8AA41"/>
<dbReference type="OrthoDB" id="9809438at2"/>
<dbReference type="UniPathway" id="UPA00056">
    <property type="reaction ID" value="UER00094"/>
</dbReference>
<dbReference type="Proteomes" id="UP000001414">
    <property type="component" value="Chromosome"/>
</dbReference>
<dbReference type="GO" id="GO:0050515">
    <property type="term" value="F:4-(cytidine 5'-diphospho)-2-C-methyl-D-erythritol kinase activity"/>
    <property type="evidence" value="ECO:0000318"/>
    <property type="project" value="GO_Central"/>
</dbReference>
<dbReference type="GO" id="GO:0005524">
    <property type="term" value="F:ATP binding"/>
    <property type="evidence" value="ECO:0007669"/>
    <property type="project" value="UniProtKB-UniRule"/>
</dbReference>
<dbReference type="GO" id="GO:0019288">
    <property type="term" value="P:isopentenyl diphosphate biosynthetic process, methylerythritol 4-phosphate pathway"/>
    <property type="evidence" value="ECO:0007669"/>
    <property type="project" value="UniProtKB-UniRule"/>
</dbReference>
<dbReference type="GO" id="GO:0016114">
    <property type="term" value="P:terpenoid biosynthetic process"/>
    <property type="evidence" value="ECO:0007669"/>
    <property type="project" value="InterPro"/>
</dbReference>
<dbReference type="Gene3D" id="3.30.230.10">
    <property type="match status" value="1"/>
</dbReference>
<dbReference type="Gene3D" id="3.30.70.890">
    <property type="entry name" value="GHMP kinase, C-terminal domain"/>
    <property type="match status" value="1"/>
</dbReference>
<dbReference type="HAMAP" id="MF_00061">
    <property type="entry name" value="IspE"/>
    <property type="match status" value="1"/>
</dbReference>
<dbReference type="InterPro" id="IPR013750">
    <property type="entry name" value="GHMP_kinase_C_dom"/>
</dbReference>
<dbReference type="InterPro" id="IPR036554">
    <property type="entry name" value="GHMP_kinase_C_sf"/>
</dbReference>
<dbReference type="InterPro" id="IPR006204">
    <property type="entry name" value="GHMP_kinase_N_dom"/>
</dbReference>
<dbReference type="InterPro" id="IPR004424">
    <property type="entry name" value="IspE"/>
</dbReference>
<dbReference type="InterPro" id="IPR020568">
    <property type="entry name" value="Ribosomal_Su5_D2-typ_SF"/>
</dbReference>
<dbReference type="InterPro" id="IPR014721">
    <property type="entry name" value="Ribsml_uS5_D2-typ_fold_subgr"/>
</dbReference>
<dbReference type="NCBIfam" id="TIGR00154">
    <property type="entry name" value="ispE"/>
    <property type="match status" value="1"/>
</dbReference>
<dbReference type="PANTHER" id="PTHR43527">
    <property type="entry name" value="4-DIPHOSPHOCYTIDYL-2-C-METHYL-D-ERYTHRITOL KINASE, CHLOROPLASTIC"/>
    <property type="match status" value="1"/>
</dbReference>
<dbReference type="PANTHER" id="PTHR43527:SF2">
    <property type="entry name" value="4-DIPHOSPHOCYTIDYL-2-C-METHYL-D-ERYTHRITOL KINASE, CHLOROPLASTIC"/>
    <property type="match status" value="1"/>
</dbReference>
<dbReference type="Pfam" id="PF08544">
    <property type="entry name" value="GHMP_kinases_C"/>
    <property type="match status" value="1"/>
</dbReference>
<dbReference type="Pfam" id="PF00288">
    <property type="entry name" value="GHMP_kinases_N"/>
    <property type="match status" value="1"/>
</dbReference>
<dbReference type="PIRSF" id="PIRSF010376">
    <property type="entry name" value="IspE"/>
    <property type="match status" value="1"/>
</dbReference>
<dbReference type="SUPFAM" id="SSF55060">
    <property type="entry name" value="GHMP Kinase, C-terminal domain"/>
    <property type="match status" value="1"/>
</dbReference>
<dbReference type="SUPFAM" id="SSF54211">
    <property type="entry name" value="Ribosomal protein S5 domain 2-like"/>
    <property type="match status" value="1"/>
</dbReference>
<protein>
    <recommendedName>
        <fullName evidence="1">4-diphosphocytidyl-2-C-methyl-D-erythritol kinase</fullName>
        <shortName evidence="1">CMK</shortName>
        <ecNumber evidence="1">2.7.1.148</ecNumber>
    </recommendedName>
    <alternativeName>
        <fullName evidence="1">4-(cytidine-5'-diphospho)-2-C-methyl-D-erythritol kinase</fullName>
    </alternativeName>
</protein>
<keyword id="KW-0067">ATP-binding</keyword>
<keyword id="KW-0414">Isoprene biosynthesis</keyword>
<keyword id="KW-0418">Kinase</keyword>
<keyword id="KW-0547">Nucleotide-binding</keyword>
<keyword id="KW-1185">Reference proteome</keyword>
<keyword id="KW-0808">Transferase</keyword>
<organism>
    <name type="scientific">Bacteroides thetaiotaomicron (strain ATCC 29148 / DSM 2079 / JCM 5827 / CCUG 10774 / NCTC 10582 / VPI-5482 / E50)</name>
    <dbReference type="NCBI Taxonomy" id="226186"/>
    <lineage>
        <taxon>Bacteria</taxon>
        <taxon>Pseudomonadati</taxon>
        <taxon>Bacteroidota</taxon>
        <taxon>Bacteroidia</taxon>
        <taxon>Bacteroidales</taxon>
        <taxon>Bacteroidaceae</taxon>
        <taxon>Bacteroides</taxon>
    </lineage>
</organism>
<reference key="1">
    <citation type="journal article" date="2003" name="Science">
        <title>A genomic view of the human-Bacteroides thetaiotaomicron symbiosis.</title>
        <authorList>
            <person name="Xu J."/>
            <person name="Bjursell M.K."/>
            <person name="Himrod J."/>
            <person name="Deng S."/>
            <person name="Carmichael L.K."/>
            <person name="Chiang H.C."/>
            <person name="Hooper L.V."/>
            <person name="Gordon J.I."/>
        </authorList>
    </citation>
    <scope>NUCLEOTIDE SEQUENCE [LARGE SCALE GENOMIC DNA]</scope>
    <source>
        <strain>ATCC 29148 / DSM 2079 / JCM 5827 / CCUG 10774 / NCTC 10582 / VPI-5482 / E50</strain>
    </source>
</reference>
<comment type="function">
    <text evidence="1">Catalyzes the phosphorylation of the position 2 hydroxy group of 4-diphosphocytidyl-2C-methyl-D-erythritol.</text>
</comment>
<comment type="catalytic activity">
    <reaction evidence="1">
        <text>4-CDP-2-C-methyl-D-erythritol + ATP = 4-CDP-2-C-methyl-D-erythritol 2-phosphate + ADP + H(+)</text>
        <dbReference type="Rhea" id="RHEA:18437"/>
        <dbReference type="ChEBI" id="CHEBI:15378"/>
        <dbReference type="ChEBI" id="CHEBI:30616"/>
        <dbReference type="ChEBI" id="CHEBI:57823"/>
        <dbReference type="ChEBI" id="CHEBI:57919"/>
        <dbReference type="ChEBI" id="CHEBI:456216"/>
        <dbReference type="EC" id="2.7.1.148"/>
    </reaction>
</comment>
<comment type="pathway">
    <text evidence="1">Isoprenoid biosynthesis; isopentenyl diphosphate biosynthesis via DXP pathway; isopentenyl diphosphate from 1-deoxy-D-xylulose 5-phosphate: step 3/6.</text>
</comment>
<comment type="similarity">
    <text evidence="1">Belongs to the GHMP kinase family. IspE subfamily.</text>
</comment>
<proteinExistence type="inferred from homology"/>
<sequence length="274" mass="30534">MITFPNAKINLGLSITEKRPDGYHNLETVFYPVALEDALEIRTSPEADKKFSLHQYGMEISGNPEDNLVVKAYLLLDKEFHLCPIEIHLYKHIPSGAGLGGGSSDAAFMLKLLNEHFQLNLSEDQLEIYAATLGADCAFFIRNAPTFAEGVGNIFSPIPLSLKGYQILIIKPDVFVSTREAFANIHPHHPEYSIKEAIKRPVNEWKEILINDFEDSVFPQHPVIGEIKAELYRQGAVYASMSGSGSSVYGLFEPEGTLPETDWGTNVFCFKGRL</sequence>
<name>ISPE_BACTN</name>